<protein>
    <recommendedName>
        <fullName>Ras association domain-containing protein 1</fullName>
    </recommendedName>
    <alternativeName>
        <fullName>Protein 123F2</fullName>
    </alternativeName>
</protein>
<name>RASF1_MOUSE</name>
<keyword id="KW-0007">Acetylation</keyword>
<keyword id="KW-0877">Alternative promoter usage</keyword>
<keyword id="KW-0131">Cell cycle</keyword>
<keyword id="KW-0963">Cytoplasm</keyword>
<keyword id="KW-0206">Cytoskeleton</keyword>
<keyword id="KW-0479">Metal-binding</keyword>
<keyword id="KW-0493">Microtubule</keyword>
<keyword id="KW-0539">Nucleus</keyword>
<keyword id="KW-0597">Phosphoprotein</keyword>
<keyword id="KW-1185">Reference proteome</keyword>
<keyword id="KW-0043">Tumor suppressor</keyword>
<keyword id="KW-0862">Zinc</keyword>
<keyword id="KW-0863">Zinc-finger</keyword>
<comment type="function">
    <text evidence="1">Potential tumor suppressor. Required for death receptor-dependent apoptosis. Mediates activation of Mediates activation of STK3/MST2 and STK4/MST1 during Fas-induced apoptosis by preventing their dephosphorylation. When associated with MOAP1, promotes BAX conformational change and translocation to mitochondrial membranes in response to TNF and TNFSF10 stimulation. Isoform A interacts with CDC20, an activator of the anaphase-promoting complex, APC, resulting in the inhibition of APC activity and mitotic progression. Inhibits proliferation by negatively regulating cell cycle progression at the level of G1/S-phase transition by regulating accumulation of cyclin D1 protein. Isoform C has been shown not to perform these roles, no function has been identified for this isoform. Isoform A disrupts interactions among MDM2, DAXX and USP7, thus contributing to the efficient activation of TP53 by promoting MDM2 self-ubiquitination in cell-cycle checkpoint control in response to DNA damage (By similarity).</text>
</comment>
<comment type="subunit">
    <text evidence="2">Interacts with MAP1S and XPA (By similarity). Binds to the N-terminal of CDC20 during prometaphase (By similarity). Binds to STK3/MST2 and STK4/MST1 (By similarity). Recruited to the TNFRSF1A and TNFRSF10A complexes in response to their respective cognate ligand, after internalization (By similarity). Can self-associate (By similarity). Part of a complex with MDM2, DAXX, RASSF1 and USP7 (By similarity).</text>
</comment>
<comment type="subunit">
    <molecule>Isoform A</molecule>
    <text evidence="2 8">Interacts with MOAP1 and E4F1 (By similarity). Interacts with RSSF5 and probably associates with HRAS via a RSSF1 isoform A-RSSF5 heterodimer (By similarity). Interacts (via C-terminus) with DAXX (via N-terminus); the interaction is independent of MDM2 and TP53 (By similarity). Interacts (via N-terminus) with MDM2 (via C-terminus); the interaction is independent of TP53 (By similarity). Interacts with RAB39A (PubMed:23294242). Interacts with RAB39B; the interaction is weak (PubMed:23294242).</text>
</comment>
<comment type="subunit">
    <molecule>Isoform C</molecule>
    <text evidence="7 8">Interacts with ECM2 (PubMed:17335777). Interacts with RAB39B; the interaction is strong (PubMed:23294242). Does not interact with RAB39A (PubMed:23294242).</text>
</comment>
<comment type="subcellular location">
    <molecule>Isoform A</molecule>
    <subcellularLocation>
        <location evidence="1">Cytoplasm</location>
        <location evidence="1">Cytoskeleton</location>
    </subcellularLocation>
    <subcellularLocation>
        <location evidence="1">Cytoplasm</location>
        <location evidence="1">Cytoskeleton</location>
        <location evidence="1">Microtubule organizing center</location>
        <location evidence="1">Centrosome</location>
    </subcellularLocation>
    <subcellularLocation>
        <location evidence="1">Cytoplasm</location>
        <location evidence="1">Cytoskeleton</location>
        <location evidence="1">Spindle</location>
    </subcellularLocation>
    <subcellularLocation>
        <location evidence="1">Cytoplasm</location>
        <location evidence="1">Cytoskeleton</location>
        <location evidence="1">Spindle pole</location>
    </subcellularLocation>
    <text evidence="1">Localizes to cytoplasmic microtubules during interphase, to bipolar centrosomes associated with microtubules during prophase, to spindle fibers and spindle poles at metaphase and anaphase, to the midzone during early telophase, and to the midbody in late telophase in cells. Colocalizes with MDM2 in the nucleus (By similarity).</text>
</comment>
<comment type="subcellular location">
    <molecule>Isoform C</molecule>
    <subcellularLocation>
        <location evidence="1">Nucleus</location>
    </subcellularLocation>
    <text evidence="1">Predominantly nuclear.</text>
</comment>
<comment type="alternative products">
    <event type="alternative promoter"/>
    <isoform>
        <id>Q99MK9-1</id>
        <name>A</name>
        <sequence type="displayed"/>
    </isoform>
    <isoform>
        <id>Q99MK9-2</id>
        <name>C</name>
        <sequence type="described" ref="VSP_050779 VSP_050780"/>
    </isoform>
</comment>
<gene>
    <name evidence="14" type="primary">Rassf1</name>
</gene>
<reference evidence="12 15" key="1">
    <citation type="journal article" date="2001" name="J. Natl. Cancer Inst.">
        <title>Epigenetic inactivation of RASSF1A in lung and breast cancers and malignant phenotype suppression.</title>
        <authorList>
            <person name="Burbee D.G."/>
            <person name="Forgacs E."/>
            <person name="Zochbauer-Muller S."/>
            <person name="Shivakumar L."/>
            <person name="Fong K."/>
            <person name="Gao B."/>
            <person name="Randle D."/>
            <person name="Kondo M."/>
            <person name="Virmani A."/>
            <person name="Bader S."/>
            <person name="Sekido Y."/>
            <person name="Latif F."/>
            <person name="Milchgrub S."/>
            <person name="Toyooka S."/>
            <person name="Gazdar A.F."/>
            <person name="Lerman M.I."/>
            <person name="Zabarovsky E."/>
            <person name="White M."/>
            <person name="Minna J.D."/>
        </authorList>
    </citation>
    <scope>NUCLEOTIDE SEQUENCE [MRNA] (ISOFORM C)</scope>
</reference>
<reference evidence="12 14" key="2">
    <citation type="submission" date="2001-01" db="EMBL/GenBank/DDBJ databases">
        <title>A mouse locus containing the ortholog of the human RASSF1 tumor suppressor gene.</title>
        <authorList>
            <person name="Dammann R."/>
            <person name="Pfeifer G.P."/>
        </authorList>
    </citation>
    <scope>NUCLEOTIDE SEQUENCE [GENOMIC DNA]</scope>
    <scope>ALTERNATIVE PROMOTER USAGE</scope>
    <source>
        <strain evidence="14">129/Sv</strain>
    </source>
</reference>
<reference evidence="12 13" key="3">
    <citation type="journal article" date="2004" name="Genome Res.">
        <title>The status, quality, and expansion of the NIH full-length cDNA project: the Mammalian Gene Collection (MGC).</title>
        <authorList>
            <consortium name="The MGC Project Team"/>
        </authorList>
    </citation>
    <scope>NUCLEOTIDE SEQUENCE [LARGE SCALE MRNA] (ISOFORM C)</scope>
    <source>
        <tissue evidence="13">Mammary gland</tissue>
    </source>
</reference>
<reference key="4">
    <citation type="journal article" date="2007" name="Biochem. Biophys. Res. Commun.">
        <title>Characterization of hampin/MSL1 as a node in the nuclear interactome.</title>
        <authorList>
            <person name="Dmitriev R.I."/>
            <person name="Korneenko T.V."/>
            <person name="Bessonov A.A."/>
            <person name="Shakhparonov M.I."/>
            <person name="Modyanov N.N."/>
            <person name="Pestov N.B."/>
        </authorList>
    </citation>
    <scope>INTERACTION WITH ECM2</scope>
</reference>
<reference key="5">
    <citation type="journal article" date="2013" name="Genes Cells">
        <title>C. elegans Rassf homolog, rasf-1, is functionally associated with rab-39 Rab GTPase in oxidative stress response.</title>
        <authorList>
            <person name="Takenaka M."/>
            <person name="Inoue H."/>
            <person name="Takeshima A."/>
            <person name="Kakura T."/>
            <person name="Hori T."/>
        </authorList>
    </citation>
    <scope>INTERACTION WITH RAB39A AND RAB39B</scope>
</reference>
<evidence type="ECO:0000250" key="1"/>
<evidence type="ECO:0000250" key="2">
    <source>
        <dbReference type="UniProtKB" id="Q9NS23"/>
    </source>
</evidence>
<evidence type="ECO:0000255" key="3">
    <source>
        <dbReference type="PROSITE-ProRule" id="PRU00166"/>
    </source>
</evidence>
<evidence type="ECO:0000255" key="4">
    <source>
        <dbReference type="PROSITE-ProRule" id="PRU00226"/>
    </source>
</evidence>
<evidence type="ECO:0000255" key="5">
    <source>
        <dbReference type="PROSITE-ProRule" id="PRU00310"/>
    </source>
</evidence>
<evidence type="ECO:0000256" key="6">
    <source>
        <dbReference type="SAM" id="MobiDB-lite"/>
    </source>
</evidence>
<evidence type="ECO:0000269" key="7">
    <source>
    </source>
</evidence>
<evidence type="ECO:0000269" key="8">
    <source>
    </source>
</evidence>
<evidence type="ECO:0000303" key="9">
    <source>
    </source>
</evidence>
<evidence type="ECO:0000303" key="10">
    <source>
    </source>
</evidence>
<evidence type="ECO:0000303" key="11">
    <source ref="2"/>
</evidence>
<evidence type="ECO:0000305" key="12"/>
<evidence type="ECO:0000312" key="13">
    <source>
        <dbReference type="EMBL" id="AAH02173.1"/>
    </source>
</evidence>
<evidence type="ECO:0000312" key="14">
    <source>
        <dbReference type="EMBL" id="AAK21200.1"/>
    </source>
</evidence>
<evidence type="ECO:0000312" key="15">
    <source>
        <dbReference type="EMBL" id="AAK21201.1"/>
    </source>
</evidence>
<accession>Q99MK9</accession>
<accession>Q9WUF5</accession>
<proteinExistence type="evidence at protein level"/>
<dbReference type="EMBL" id="AF132851">
    <property type="protein sequence ID" value="AAD30061.1"/>
    <property type="molecule type" value="mRNA"/>
</dbReference>
<dbReference type="EMBL" id="AF333027">
    <property type="protein sequence ID" value="AAK21200.1"/>
    <property type="molecule type" value="Genomic_DNA"/>
</dbReference>
<dbReference type="EMBL" id="AF333027">
    <property type="protein sequence ID" value="AAK21201.1"/>
    <property type="molecule type" value="Genomic_DNA"/>
</dbReference>
<dbReference type="EMBL" id="BC002173">
    <property type="protein sequence ID" value="AAH02173.1"/>
    <property type="molecule type" value="mRNA"/>
</dbReference>
<dbReference type="CCDS" id="CCDS23494.1">
    <molecule id="Q99MK9-2"/>
</dbReference>
<dbReference type="CCDS" id="CCDS57699.1">
    <molecule id="Q99MK9-1"/>
</dbReference>
<dbReference type="RefSeq" id="NP_001230677.1">
    <molecule id="Q99MK9-1"/>
    <property type="nucleotide sequence ID" value="NM_001243748.2"/>
</dbReference>
<dbReference type="RefSeq" id="NP_062687.1">
    <molecule id="Q99MK9-2"/>
    <property type="nucleotide sequence ID" value="NM_019713.5"/>
</dbReference>
<dbReference type="SMR" id="Q99MK9"/>
<dbReference type="BioGRID" id="207877">
    <property type="interactions" value="32"/>
</dbReference>
<dbReference type="CORUM" id="Q99MK9"/>
<dbReference type="FunCoup" id="Q99MK9">
    <property type="interactions" value="1882"/>
</dbReference>
<dbReference type="IntAct" id="Q99MK9">
    <property type="interactions" value="31"/>
</dbReference>
<dbReference type="MINT" id="Q99MK9"/>
<dbReference type="STRING" id="10090.ENSMUSP00000091301"/>
<dbReference type="GlyGen" id="Q99MK9">
    <property type="glycosylation" value="1 site, 1 O-linked glycan (1 site)"/>
</dbReference>
<dbReference type="iPTMnet" id="Q99MK9"/>
<dbReference type="PhosphoSitePlus" id="Q99MK9"/>
<dbReference type="PaxDb" id="10090-ENSMUSP00000010211"/>
<dbReference type="ProteomicsDB" id="255104">
    <molecule id="Q99MK9-1"/>
</dbReference>
<dbReference type="ProteomicsDB" id="255105">
    <molecule id="Q99MK9-2"/>
</dbReference>
<dbReference type="Pumba" id="Q99MK9"/>
<dbReference type="Antibodypedia" id="30900">
    <property type="antibodies" value="535 antibodies from 37 providers"/>
</dbReference>
<dbReference type="DNASU" id="56289"/>
<dbReference type="Ensembl" id="ENSMUST00000010211.7">
    <molecule id="Q99MK9-2"/>
    <property type="protein sequence ID" value="ENSMUSP00000010211.5"/>
    <property type="gene ID" value="ENSMUSG00000010067.14"/>
</dbReference>
<dbReference type="Ensembl" id="ENSMUST00000093786.9">
    <molecule id="Q99MK9-1"/>
    <property type="protein sequence ID" value="ENSMUSP00000091301.3"/>
    <property type="gene ID" value="ENSMUSG00000010067.14"/>
</dbReference>
<dbReference type="GeneID" id="56289"/>
<dbReference type="KEGG" id="mmu:56289"/>
<dbReference type="UCSC" id="uc009rlq.2">
    <molecule id="Q99MK9-2"/>
    <property type="organism name" value="mouse"/>
</dbReference>
<dbReference type="UCSC" id="uc012hag.2">
    <molecule id="Q99MK9-1"/>
    <property type="organism name" value="mouse"/>
</dbReference>
<dbReference type="AGR" id="MGI:1928386"/>
<dbReference type="CTD" id="11186"/>
<dbReference type="MGI" id="MGI:1928386">
    <property type="gene designation" value="Rassf1"/>
</dbReference>
<dbReference type="VEuPathDB" id="HostDB:ENSMUSG00000010067"/>
<dbReference type="eggNOG" id="KOG4239">
    <property type="taxonomic scope" value="Eukaryota"/>
</dbReference>
<dbReference type="GeneTree" id="ENSGT00940000155664"/>
<dbReference type="HOGENOM" id="CLU_045544_0_1_1"/>
<dbReference type="InParanoid" id="Q99MK9"/>
<dbReference type="OrthoDB" id="40681at9989"/>
<dbReference type="PhylomeDB" id="Q99MK9"/>
<dbReference type="TreeFam" id="TF319243"/>
<dbReference type="BioGRID-ORCS" id="56289">
    <property type="hits" value="3 hits in 76 CRISPR screens"/>
</dbReference>
<dbReference type="ChiTaRS" id="Rassf1">
    <property type="organism name" value="mouse"/>
</dbReference>
<dbReference type="PRO" id="PR:Q99MK9"/>
<dbReference type="Proteomes" id="UP000000589">
    <property type="component" value="Chromosome 9"/>
</dbReference>
<dbReference type="RNAct" id="Q99MK9">
    <property type="molecule type" value="protein"/>
</dbReference>
<dbReference type="Bgee" id="ENSMUSG00000010067">
    <property type="expression patterns" value="Expressed in optic fissure and 252 other cell types or tissues"/>
</dbReference>
<dbReference type="ExpressionAtlas" id="Q99MK9">
    <property type="expression patterns" value="baseline and differential"/>
</dbReference>
<dbReference type="GO" id="GO:0005813">
    <property type="term" value="C:centrosome"/>
    <property type="evidence" value="ECO:0007669"/>
    <property type="project" value="UniProtKB-SubCell"/>
</dbReference>
<dbReference type="GO" id="GO:0005737">
    <property type="term" value="C:cytoplasm"/>
    <property type="evidence" value="ECO:0007669"/>
    <property type="project" value="UniProtKB-KW"/>
</dbReference>
<dbReference type="GO" id="GO:0005874">
    <property type="term" value="C:microtubule"/>
    <property type="evidence" value="ECO:0007669"/>
    <property type="project" value="UniProtKB-KW"/>
</dbReference>
<dbReference type="GO" id="GO:0015630">
    <property type="term" value="C:microtubule cytoskeleton"/>
    <property type="evidence" value="ECO:0000250"/>
    <property type="project" value="UniProtKB"/>
</dbReference>
<dbReference type="GO" id="GO:0005634">
    <property type="term" value="C:nucleus"/>
    <property type="evidence" value="ECO:0000250"/>
    <property type="project" value="UniProtKB"/>
</dbReference>
<dbReference type="GO" id="GO:0000922">
    <property type="term" value="C:spindle pole"/>
    <property type="evidence" value="ECO:0007669"/>
    <property type="project" value="UniProtKB-SubCell"/>
</dbReference>
<dbReference type="GO" id="GO:0031267">
    <property type="term" value="F:small GTPase binding"/>
    <property type="evidence" value="ECO:0000314"/>
    <property type="project" value="UniProtKB"/>
</dbReference>
<dbReference type="GO" id="GO:0008270">
    <property type="term" value="F:zinc ion binding"/>
    <property type="evidence" value="ECO:0007669"/>
    <property type="project" value="UniProtKB-KW"/>
</dbReference>
<dbReference type="GO" id="GO:0006974">
    <property type="term" value="P:DNA damage response"/>
    <property type="evidence" value="ECO:0000250"/>
    <property type="project" value="UniProtKB"/>
</dbReference>
<dbReference type="GO" id="GO:0031398">
    <property type="term" value="P:positive regulation of protein ubiquitination"/>
    <property type="evidence" value="ECO:0000250"/>
    <property type="project" value="UniProtKB"/>
</dbReference>
<dbReference type="GO" id="GO:0050821">
    <property type="term" value="P:protein stabilization"/>
    <property type="evidence" value="ECO:0000250"/>
    <property type="project" value="UniProtKB"/>
</dbReference>
<dbReference type="GO" id="GO:0007265">
    <property type="term" value="P:Ras protein signal transduction"/>
    <property type="evidence" value="ECO:0000250"/>
    <property type="project" value="UniProtKB"/>
</dbReference>
<dbReference type="GO" id="GO:0051726">
    <property type="term" value="P:regulation of cell cycle"/>
    <property type="evidence" value="ECO:0000250"/>
    <property type="project" value="UniProtKB"/>
</dbReference>
<dbReference type="GO" id="GO:1902806">
    <property type="term" value="P:regulation of cell cycle G1/S phase transition"/>
    <property type="evidence" value="ECO:0000250"/>
    <property type="project" value="UniProtKB"/>
</dbReference>
<dbReference type="CDD" id="cd20885">
    <property type="entry name" value="C1_RASSF1"/>
    <property type="match status" value="1"/>
</dbReference>
<dbReference type="CDD" id="cd17218">
    <property type="entry name" value="RA_RASSF1"/>
    <property type="match status" value="1"/>
</dbReference>
<dbReference type="CDD" id="cd21890">
    <property type="entry name" value="SARAH_RASSF1"/>
    <property type="match status" value="1"/>
</dbReference>
<dbReference type="FunFam" id="3.10.20.90:FF:000048">
    <property type="entry name" value="Ras association domain family member 1"/>
    <property type="match status" value="1"/>
</dbReference>
<dbReference type="FunFam" id="3.30.60.20:FF:000087">
    <property type="entry name" value="Ras association domain family member 1"/>
    <property type="match status" value="1"/>
</dbReference>
<dbReference type="FunFam" id="1.20.5.110:FF:000027">
    <property type="entry name" value="ras association domain-containing protein 1 isoform X1"/>
    <property type="match status" value="1"/>
</dbReference>
<dbReference type="Gene3D" id="1.20.5.110">
    <property type="match status" value="1"/>
</dbReference>
<dbReference type="Gene3D" id="3.30.60.20">
    <property type="match status" value="1"/>
</dbReference>
<dbReference type="Gene3D" id="3.10.20.90">
    <property type="entry name" value="Phosphatidylinositol 3-kinase Catalytic Subunit, Chain A, domain 1"/>
    <property type="match status" value="1"/>
</dbReference>
<dbReference type="InterPro" id="IPR046349">
    <property type="entry name" value="C1-like_sf"/>
</dbReference>
<dbReference type="InterPro" id="IPR002219">
    <property type="entry name" value="PE/DAG-bd"/>
</dbReference>
<dbReference type="InterPro" id="IPR000159">
    <property type="entry name" value="RA_dom"/>
</dbReference>
<dbReference type="InterPro" id="IPR033614">
    <property type="entry name" value="RASSF1-6"/>
</dbReference>
<dbReference type="InterPro" id="IPR033600">
    <property type="entry name" value="RASSF1_RA"/>
</dbReference>
<dbReference type="InterPro" id="IPR011524">
    <property type="entry name" value="SARAH_dom"/>
</dbReference>
<dbReference type="InterPro" id="IPR029071">
    <property type="entry name" value="Ubiquitin-like_domsf"/>
</dbReference>
<dbReference type="PANTHER" id="PTHR22738:SF12">
    <property type="entry name" value="RAS ASSOCIATION DOMAIN-CONTAINING PROTEIN 1"/>
    <property type="match status" value="1"/>
</dbReference>
<dbReference type="PANTHER" id="PTHR22738">
    <property type="entry name" value="RASSF"/>
    <property type="match status" value="1"/>
</dbReference>
<dbReference type="Pfam" id="PF00130">
    <property type="entry name" value="C1_1"/>
    <property type="match status" value="1"/>
</dbReference>
<dbReference type="Pfam" id="PF16517">
    <property type="entry name" value="Nore1-SARAH"/>
    <property type="match status" value="1"/>
</dbReference>
<dbReference type="Pfam" id="PF00788">
    <property type="entry name" value="RA"/>
    <property type="match status" value="1"/>
</dbReference>
<dbReference type="SMART" id="SM00109">
    <property type="entry name" value="C1"/>
    <property type="match status" value="1"/>
</dbReference>
<dbReference type="SMART" id="SM00314">
    <property type="entry name" value="RA"/>
    <property type="match status" value="1"/>
</dbReference>
<dbReference type="SUPFAM" id="SSF57889">
    <property type="entry name" value="Cysteine-rich domain"/>
    <property type="match status" value="1"/>
</dbReference>
<dbReference type="SUPFAM" id="SSF54236">
    <property type="entry name" value="Ubiquitin-like"/>
    <property type="match status" value="1"/>
</dbReference>
<dbReference type="PROSITE" id="PS50200">
    <property type="entry name" value="RA"/>
    <property type="match status" value="1"/>
</dbReference>
<dbReference type="PROSITE" id="PS50951">
    <property type="entry name" value="SARAH"/>
    <property type="match status" value="1"/>
</dbReference>
<dbReference type="PROSITE" id="PS00479">
    <property type="entry name" value="ZF_DAG_PE_1"/>
    <property type="match status" value="1"/>
</dbReference>
<dbReference type="PROSITE" id="PS50081">
    <property type="entry name" value="ZF_DAG_PE_2"/>
    <property type="match status" value="1"/>
</dbReference>
<sequence>MSAEPELIELRELAPSGRIGPGRTRLERANALRIAPGTTRNPSQQHVPGRGHRFQPAGPTTHTWCDLCGDFIWGVVRKGLQCAHCKFTCHYRCRALVCLDCCGPRDLGWDSALERDTNVDEAVERETPDLSQAETEQKIKDYNGQINSNLFMSLNKDGSYTGFIKVQLKLVRPVSVPSSKKPPSLQDARRGTGRSTAVKRRTSFYLPKDAIKHLHVLSRTRAREVIEALLRKFMVVDDPRKFALFERTERHGQVYLRKLSDDEQPLKLRLLAGPSEKALSFVLKENDSGEVNWDAFSMPELHNFLRILQREEEEHLRQILQKYSRCRQKIQEALHACPLG</sequence>
<feature type="initiator methionine" description="Removed" evidence="2">
    <location>
        <position position="1"/>
    </location>
</feature>
<feature type="chain" id="PRO_0000068892" description="Ras association domain-containing protein 1">
    <location>
        <begin position="2"/>
        <end position="340"/>
    </location>
</feature>
<feature type="domain" description="Ras-associating" evidence="3">
    <location>
        <begin position="194"/>
        <end position="288"/>
    </location>
</feature>
<feature type="domain" description="SARAH" evidence="5">
    <location>
        <begin position="290"/>
        <end position="337"/>
    </location>
</feature>
<feature type="zinc finger region" description="Phorbol-ester/DAG-type" evidence="4">
    <location>
        <begin position="51"/>
        <end position="101"/>
    </location>
</feature>
<feature type="region of interest" description="Mediates interaction with E4F1" evidence="1">
    <location>
        <begin position="2"/>
        <end position="115"/>
    </location>
</feature>
<feature type="region of interest" description="Disordered" evidence="6">
    <location>
        <begin position="175"/>
        <end position="196"/>
    </location>
</feature>
<feature type="region of interest" description="MOAP1-binding" evidence="1">
    <location>
        <begin position="311"/>
        <end position="314"/>
    </location>
</feature>
<feature type="compositionally biased region" description="Low complexity" evidence="6">
    <location>
        <begin position="175"/>
        <end position="185"/>
    </location>
</feature>
<feature type="modified residue" description="N-acetylserine" evidence="2">
    <location>
        <position position="2"/>
    </location>
</feature>
<feature type="modified residue" description="Phosphoserine" evidence="2">
    <location>
        <position position="2"/>
    </location>
</feature>
<feature type="splice variant" id="VSP_050779" description="In isoform C." evidence="9 10">
    <location>
        <begin position="1"/>
        <end position="70"/>
    </location>
</feature>
<feature type="splice variant" id="VSP_050780" description="In isoform C." evidence="9 10 11">
    <original>FIWGVVRKGLQCAHCKFTCHYRCRALVCLDCCGPRDLGWDSALERDTNV</original>
    <variation>MGEAETPSFEMTWSSTTSSGYCSQEDSDSELEQYFTARTSLVRRPRRDQ</variation>
    <location>
        <begin position="71"/>
        <end position="119"/>
    </location>
</feature>
<organism>
    <name type="scientific">Mus musculus</name>
    <name type="common">Mouse</name>
    <dbReference type="NCBI Taxonomy" id="10090"/>
    <lineage>
        <taxon>Eukaryota</taxon>
        <taxon>Metazoa</taxon>
        <taxon>Chordata</taxon>
        <taxon>Craniata</taxon>
        <taxon>Vertebrata</taxon>
        <taxon>Euteleostomi</taxon>
        <taxon>Mammalia</taxon>
        <taxon>Eutheria</taxon>
        <taxon>Euarchontoglires</taxon>
        <taxon>Glires</taxon>
        <taxon>Rodentia</taxon>
        <taxon>Myomorpha</taxon>
        <taxon>Muroidea</taxon>
        <taxon>Muridae</taxon>
        <taxon>Murinae</taxon>
        <taxon>Mus</taxon>
        <taxon>Mus</taxon>
    </lineage>
</organism>